<sequence>MQTLTIIRPDDMHLHLRDGDALKAVAPYTARQMGRAVIMPNLKPPVVSVADALAYKARIMAALPEGSAFEPLMTLYLTDQATPELVREAKAAGIVAFKLYPAGATTNSDSGVTDLFKLIPVLEEMAKQGILFLVHGEVTDPEIDIFDREAAFIGRVMKPVLAQVPNLKVVFEHITTAEAARLVLEAGDNVAASVTPQHLLLNRNDLLVGGVRPHHFCLPVLKRETHRQALVAAVTGEKAHKFFLGTDSAPHAKSAKENACGCAGMFSAMTAIELYAEVFEKAGALDKLEAFASENGARFYGIPENADTITLVKQSQTVPASVPYGDGELVPMRAGGEIGWTVQY</sequence>
<comment type="function">
    <text evidence="1">Catalyzes the reversible cyclization of carbamoyl aspartate to dihydroorotate.</text>
</comment>
<comment type="catalytic activity">
    <reaction evidence="1">
        <text>(S)-dihydroorotate + H2O = N-carbamoyl-L-aspartate + H(+)</text>
        <dbReference type="Rhea" id="RHEA:24296"/>
        <dbReference type="ChEBI" id="CHEBI:15377"/>
        <dbReference type="ChEBI" id="CHEBI:15378"/>
        <dbReference type="ChEBI" id="CHEBI:30864"/>
        <dbReference type="ChEBI" id="CHEBI:32814"/>
        <dbReference type="EC" id="3.5.2.3"/>
    </reaction>
</comment>
<comment type="cofactor">
    <cofactor evidence="1">
        <name>Zn(2+)</name>
        <dbReference type="ChEBI" id="CHEBI:29105"/>
    </cofactor>
    <text evidence="1">Binds 2 Zn(2+) ions per subunit.</text>
</comment>
<comment type="pathway">
    <text evidence="1">Pyrimidine metabolism; UMP biosynthesis via de novo pathway; (S)-dihydroorotate from bicarbonate: step 3/3.</text>
</comment>
<comment type="subunit">
    <text evidence="1">Homodimer.</text>
</comment>
<comment type="similarity">
    <text evidence="1">Belongs to the metallo-dependent hydrolases superfamily. DHOase family. Class II DHOase subfamily.</text>
</comment>
<feature type="chain" id="PRO_1000100050" description="Dihydroorotase">
    <location>
        <begin position="1"/>
        <end position="344"/>
    </location>
</feature>
<feature type="active site" evidence="1">
    <location>
        <position position="247"/>
    </location>
</feature>
<feature type="binding site" evidence="1">
    <location>
        <position position="13"/>
    </location>
    <ligand>
        <name>Zn(2+)</name>
        <dbReference type="ChEBI" id="CHEBI:29105"/>
        <label>1</label>
    </ligand>
</feature>
<feature type="binding site" evidence="1">
    <location>
        <begin position="15"/>
        <end position="17"/>
    </location>
    <ligand>
        <name>substrate</name>
    </ligand>
</feature>
<feature type="binding site" evidence="1">
    <location>
        <position position="15"/>
    </location>
    <ligand>
        <name>Zn(2+)</name>
        <dbReference type="ChEBI" id="CHEBI:29105"/>
        <label>1</label>
    </ligand>
</feature>
<feature type="binding site" evidence="1">
    <location>
        <position position="41"/>
    </location>
    <ligand>
        <name>substrate</name>
    </ligand>
</feature>
<feature type="binding site" description="via carbamate group" evidence="1">
    <location>
        <position position="98"/>
    </location>
    <ligand>
        <name>Zn(2+)</name>
        <dbReference type="ChEBI" id="CHEBI:29105"/>
        <label>1</label>
    </ligand>
</feature>
<feature type="binding site" description="via carbamate group" evidence="1">
    <location>
        <position position="98"/>
    </location>
    <ligand>
        <name>Zn(2+)</name>
        <dbReference type="ChEBI" id="CHEBI:29105"/>
        <label>2</label>
    </ligand>
</feature>
<feature type="binding site" evidence="1">
    <location>
        <position position="135"/>
    </location>
    <ligand>
        <name>substrate</name>
    </ligand>
</feature>
<feature type="binding site" evidence="1">
    <location>
        <position position="135"/>
    </location>
    <ligand>
        <name>Zn(2+)</name>
        <dbReference type="ChEBI" id="CHEBI:29105"/>
        <label>2</label>
    </ligand>
</feature>
<feature type="binding site" evidence="1">
    <location>
        <position position="173"/>
    </location>
    <ligand>
        <name>Zn(2+)</name>
        <dbReference type="ChEBI" id="CHEBI:29105"/>
        <label>2</label>
    </ligand>
</feature>
<feature type="binding site" evidence="1">
    <location>
        <position position="218"/>
    </location>
    <ligand>
        <name>substrate</name>
    </ligand>
</feature>
<feature type="binding site" evidence="1">
    <location>
        <position position="247"/>
    </location>
    <ligand>
        <name>Zn(2+)</name>
        <dbReference type="ChEBI" id="CHEBI:29105"/>
        <label>1</label>
    </ligand>
</feature>
<feature type="binding site" evidence="1">
    <location>
        <position position="251"/>
    </location>
    <ligand>
        <name>substrate</name>
    </ligand>
</feature>
<feature type="binding site" evidence="1">
    <location>
        <position position="263"/>
    </location>
    <ligand>
        <name>substrate</name>
    </ligand>
</feature>
<feature type="modified residue" description="N6-carboxylysine" evidence="1">
    <location>
        <position position="98"/>
    </location>
</feature>
<proteinExistence type="inferred from homology"/>
<protein>
    <recommendedName>
        <fullName evidence="1">Dihydroorotase</fullName>
        <shortName evidence="1">DHOase</shortName>
        <ecNumber evidence="1">3.5.2.3</ecNumber>
    </recommendedName>
</protein>
<evidence type="ECO:0000255" key="1">
    <source>
        <dbReference type="HAMAP-Rule" id="MF_00219"/>
    </source>
</evidence>
<dbReference type="EC" id="3.5.2.3" evidence="1"/>
<dbReference type="EMBL" id="CP001050">
    <property type="protein sequence ID" value="ACF29083.1"/>
    <property type="molecule type" value="Genomic_DNA"/>
</dbReference>
<dbReference type="RefSeq" id="WP_003690734.1">
    <property type="nucleotide sequence ID" value="NC_011035.1"/>
</dbReference>
<dbReference type="SMR" id="B4RJT2"/>
<dbReference type="MEROPS" id="M38.A02"/>
<dbReference type="GeneID" id="66752590"/>
<dbReference type="KEGG" id="ngk:NGK_0392"/>
<dbReference type="HOGENOM" id="CLU_041558_1_0_4"/>
<dbReference type="UniPathway" id="UPA00070">
    <property type="reaction ID" value="UER00117"/>
</dbReference>
<dbReference type="Proteomes" id="UP000002564">
    <property type="component" value="Chromosome"/>
</dbReference>
<dbReference type="GO" id="GO:0005737">
    <property type="term" value="C:cytoplasm"/>
    <property type="evidence" value="ECO:0007669"/>
    <property type="project" value="TreeGrafter"/>
</dbReference>
<dbReference type="GO" id="GO:0004151">
    <property type="term" value="F:dihydroorotase activity"/>
    <property type="evidence" value="ECO:0007669"/>
    <property type="project" value="UniProtKB-UniRule"/>
</dbReference>
<dbReference type="GO" id="GO:0008270">
    <property type="term" value="F:zinc ion binding"/>
    <property type="evidence" value="ECO:0007669"/>
    <property type="project" value="UniProtKB-UniRule"/>
</dbReference>
<dbReference type="GO" id="GO:0006207">
    <property type="term" value="P:'de novo' pyrimidine nucleobase biosynthetic process"/>
    <property type="evidence" value="ECO:0007669"/>
    <property type="project" value="TreeGrafter"/>
</dbReference>
<dbReference type="GO" id="GO:0044205">
    <property type="term" value="P:'de novo' UMP biosynthetic process"/>
    <property type="evidence" value="ECO:0007669"/>
    <property type="project" value="UniProtKB-UniRule"/>
</dbReference>
<dbReference type="CDD" id="cd01294">
    <property type="entry name" value="DHOase"/>
    <property type="match status" value="1"/>
</dbReference>
<dbReference type="FunFam" id="3.20.20.140:FF:000006">
    <property type="entry name" value="Dihydroorotase"/>
    <property type="match status" value="1"/>
</dbReference>
<dbReference type="Gene3D" id="3.20.20.140">
    <property type="entry name" value="Metal-dependent hydrolases"/>
    <property type="match status" value="1"/>
</dbReference>
<dbReference type="HAMAP" id="MF_00219">
    <property type="entry name" value="PyrC_classII"/>
    <property type="match status" value="1"/>
</dbReference>
<dbReference type="InterPro" id="IPR006680">
    <property type="entry name" value="Amidohydro-rel"/>
</dbReference>
<dbReference type="InterPro" id="IPR004721">
    <property type="entry name" value="DHOdimr"/>
</dbReference>
<dbReference type="InterPro" id="IPR002195">
    <property type="entry name" value="Dihydroorotase_CS"/>
</dbReference>
<dbReference type="InterPro" id="IPR032466">
    <property type="entry name" value="Metal_Hydrolase"/>
</dbReference>
<dbReference type="NCBIfam" id="TIGR00856">
    <property type="entry name" value="pyrC_dimer"/>
    <property type="match status" value="1"/>
</dbReference>
<dbReference type="PANTHER" id="PTHR43137">
    <property type="entry name" value="DIHYDROOROTASE"/>
    <property type="match status" value="1"/>
</dbReference>
<dbReference type="PANTHER" id="PTHR43137:SF1">
    <property type="entry name" value="DIHYDROOROTASE"/>
    <property type="match status" value="1"/>
</dbReference>
<dbReference type="Pfam" id="PF01979">
    <property type="entry name" value="Amidohydro_1"/>
    <property type="match status" value="1"/>
</dbReference>
<dbReference type="PIRSF" id="PIRSF001237">
    <property type="entry name" value="DHOdimr"/>
    <property type="match status" value="1"/>
</dbReference>
<dbReference type="SUPFAM" id="SSF51556">
    <property type="entry name" value="Metallo-dependent hydrolases"/>
    <property type="match status" value="1"/>
</dbReference>
<dbReference type="PROSITE" id="PS00482">
    <property type="entry name" value="DIHYDROOROTASE_1"/>
    <property type="match status" value="1"/>
</dbReference>
<dbReference type="PROSITE" id="PS00483">
    <property type="entry name" value="DIHYDROOROTASE_2"/>
    <property type="match status" value="1"/>
</dbReference>
<gene>
    <name evidence="1" type="primary">pyrC</name>
    <name type="ordered locus">NGK_0392</name>
</gene>
<organism>
    <name type="scientific">Neisseria gonorrhoeae (strain NCCP11945)</name>
    <dbReference type="NCBI Taxonomy" id="521006"/>
    <lineage>
        <taxon>Bacteria</taxon>
        <taxon>Pseudomonadati</taxon>
        <taxon>Pseudomonadota</taxon>
        <taxon>Betaproteobacteria</taxon>
        <taxon>Neisseriales</taxon>
        <taxon>Neisseriaceae</taxon>
        <taxon>Neisseria</taxon>
    </lineage>
</organism>
<accession>B4RJT2</accession>
<name>PYRC_NEIG2</name>
<keyword id="KW-0378">Hydrolase</keyword>
<keyword id="KW-0479">Metal-binding</keyword>
<keyword id="KW-0665">Pyrimidine biosynthesis</keyword>
<keyword id="KW-0862">Zinc</keyword>
<reference key="1">
    <citation type="journal article" date="2008" name="J. Bacteriol.">
        <title>Complete genome sequence of Neisseria gonorrhoeae NCCP11945.</title>
        <authorList>
            <person name="Chung G.T."/>
            <person name="Yoo J.S."/>
            <person name="Oh H.B."/>
            <person name="Lee Y.S."/>
            <person name="Cha S.H."/>
            <person name="Kim S.J."/>
            <person name="Yoo C.K."/>
        </authorList>
    </citation>
    <scope>NUCLEOTIDE SEQUENCE [LARGE SCALE GENOMIC DNA]</scope>
    <source>
        <strain>NCCP11945</strain>
    </source>
</reference>